<proteinExistence type="evidence at protein level"/>
<organism>
    <name type="scientific">Mus musculus</name>
    <name type="common">Mouse</name>
    <dbReference type="NCBI Taxonomy" id="10090"/>
    <lineage>
        <taxon>Eukaryota</taxon>
        <taxon>Metazoa</taxon>
        <taxon>Chordata</taxon>
        <taxon>Craniata</taxon>
        <taxon>Vertebrata</taxon>
        <taxon>Euteleostomi</taxon>
        <taxon>Mammalia</taxon>
        <taxon>Eutheria</taxon>
        <taxon>Euarchontoglires</taxon>
        <taxon>Glires</taxon>
        <taxon>Rodentia</taxon>
        <taxon>Myomorpha</taxon>
        <taxon>Muroidea</taxon>
        <taxon>Muridae</taxon>
        <taxon>Murinae</taxon>
        <taxon>Mus</taxon>
        <taxon>Mus</taxon>
    </lineage>
</organism>
<name>CSN7B_MOUSE</name>
<keyword id="KW-0007">Acetylation</keyword>
<keyword id="KW-0175">Coiled coil</keyword>
<keyword id="KW-0963">Cytoplasm</keyword>
<keyword id="KW-0539">Nucleus</keyword>
<keyword id="KW-1185">Reference proteome</keyword>
<keyword id="KW-0736">Signalosome</keyword>
<feature type="initiator methionine" description="Removed" evidence="2">
    <location>
        <position position="1"/>
    </location>
</feature>
<feature type="chain" id="PRO_0000121000" description="COP9 signalosome complex subunit 7b">
    <location>
        <begin position="2"/>
        <end position="264"/>
    </location>
</feature>
<feature type="domain" description="PCI" evidence="4">
    <location>
        <begin position="2"/>
        <end position="159"/>
    </location>
</feature>
<feature type="region of interest" description="Disordered" evidence="5">
    <location>
        <begin position="223"/>
        <end position="264"/>
    </location>
</feature>
<feature type="coiled-coil region" evidence="3">
    <location>
        <begin position="194"/>
        <end position="237"/>
    </location>
</feature>
<feature type="compositionally biased region" description="Polar residues" evidence="5">
    <location>
        <begin position="223"/>
        <end position="232"/>
    </location>
</feature>
<feature type="compositionally biased region" description="Basic and acidic residues" evidence="5">
    <location>
        <begin position="235"/>
        <end position="248"/>
    </location>
</feature>
<feature type="modified residue" description="N-acetylalanine" evidence="2">
    <location>
        <position position="2"/>
    </location>
</feature>
<feature type="sequence conflict" description="In Ref. 3; AAH12659." evidence="7" ref="3">
    <original>V</original>
    <variation>A</variation>
    <location>
        <position position="90"/>
    </location>
</feature>
<feature type="sequence conflict" description="In Ref. 1; AAC33904." evidence="7" ref="1">
    <original>K</original>
    <variation>N</variation>
    <location>
        <position position="97"/>
    </location>
</feature>
<feature type="sequence conflict" description="In Ref. 1; AAC33904." evidence="7" ref="1">
    <original>V</original>
    <variation>L</variation>
    <location>
        <position position="102"/>
    </location>
</feature>
<comment type="function">
    <text evidence="1">Component of the COP9 signalosome complex (CSN), a complex involved in various cellular and developmental processes. The CSN complex is an essential regulator of the ubiquitin (Ubl) conjugation pathway by mediating the deneddylation of the cullin subunits of SCF-type E3 ligase complexes, leading to decrease the Ubl ligase activity of SCF-type complexes such as SCF, CSA or DDB2. The complex is also involved in phosphorylation of p53/TP53, JUN, I-kappa-B-alpha/NFKBIA, ITPK1 and IRF8/ICSBP, possibly via its association with CK2 and PKD kinases. CSN-dependent phosphorylation of TP53 and JUN promotes and protects degradation by the Ubl system, respectively (By similarity).</text>
</comment>
<comment type="subunit">
    <text evidence="2 6">Component of the CSN complex, composed of COPS1/GPS1, COPS2, COPS3, COPS4, COPS5, COPS6, COPS7 (COPS7A or COPS7B) and COPS8 and COPS9 (PubMed:9707402). In the complex, it probably interacts directly with COPS1, COPS2, COPS4, COPS5, COPS6 and COPS8. Interacts with EIF3S6 (By similarity).</text>
</comment>
<comment type="subcellular location">
    <subcellularLocation>
        <location evidence="1">Cytoplasm</location>
    </subcellularLocation>
    <subcellularLocation>
        <location evidence="1">Nucleus</location>
    </subcellularLocation>
</comment>
<comment type="similarity">
    <text evidence="7">Belongs to the CSN7/EIF3M family. CSN7 subfamily.</text>
</comment>
<accession>Q8BV13</accession>
<accession>O88547</accession>
<accession>Q3TGG7</accession>
<accession>Q921G4</accession>
<dbReference type="EMBL" id="AF071317">
    <property type="protein sequence ID" value="AAC33904.1"/>
    <property type="molecule type" value="mRNA"/>
</dbReference>
<dbReference type="EMBL" id="AK081309">
    <property type="protein sequence ID" value="BAC38192.1"/>
    <property type="molecule type" value="mRNA"/>
</dbReference>
<dbReference type="EMBL" id="AK168740">
    <property type="protein sequence ID" value="BAE40581.1"/>
    <property type="molecule type" value="mRNA"/>
</dbReference>
<dbReference type="EMBL" id="BC012659">
    <property type="protein sequence ID" value="AAH12659.1"/>
    <property type="molecule type" value="mRNA"/>
</dbReference>
<dbReference type="CCDS" id="CCDS15122.1"/>
<dbReference type="RefSeq" id="NP_001347816.1">
    <property type="nucleotide sequence ID" value="NM_001360887.1"/>
</dbReference>
<dbReference type="RefSeq" id="NP_766562.1">
    <property type="nucleotide sequence ID" value="NM_172974.3"/>
</dbReference>
<dbReference type="RefSeq" id="XP_006529686.1">
    <property type="nucleotide sequence ID" value="XM_006529623.3"/>
</dbReference>
<dbReference type="RefSeq" id="XP_006529687.1">
    <property type="nucleotide sequence ID" value="XM_006529624.3"/>
</dbReference>
<dbReference type="SMR" id="Q8BV13"/>
<dbReference type="BioGRID" id="205046">
    <property type="interactions" value="23"/>
</dbReference>
<dbReference type="FunCoup" id="Q8BV13">
    <property type="interactions" value="3906"/>
</dbReference>
<dbReference type="IntAct" id="Q8BV13">
    <property type="interactions" value="1"/>
</dbReference>
<dbReference type="MINT" id="Q8BV13"/>
<dbReference type="STRING" id="10090.ENSMUSP00000113587"/>
<dbReference type="GlyGen" id="Q8BV13">
    <property type="glycosylation" value="1 site, 1 O-linked glycan (1 site)"/>
</dbReference>
<dbReference type="iPTMnet" id="Q8BV13"/>
<dbReference type="PhosphoSitePlus" id="Q8BV13"/>
<dbReference type="SwissPalm" id="Q8BV13"/>
<dbReference type="PaxDb" id="10090-ENSMUSP00000113587"/>
<dbReference type="PeptideAtlas" id="Q8BV13"/>
<dbReference type="ProteomicsDB" id="284035"/>
<dbReference type="Pumba" id="Q8BV13"/>
<dbReference type="Antibodypedia" id="20213">
    <property type="antibodies" value="103 antibodies from 19 providers"/>
</dbReference>
<dbReference type="DNASU" id="26895"/>
<dbReference type="Ensembl" id="ENSMUST00000027446.11">
    <property type="protein sequence ID" value="ENSMUSP00000027446.5"/>
    <property type="gene ID" value="ENSMUSG00000026240.13"/>
</dbReference>
<dbReference type="Ensembl" id="ENSMUST00000121534.8">
    <property type="protein sequence ID" value="ENSMUSP00000113587.2"/>
    <property type="gene ID" value="ENSMUSG00000026240.13"/>
</dbReference>
<dbReference type="GeneID" id="26895"/>
<dbReference type="KEGG" id="mmu:26895"/>
<dbReference type="UCSC" id="uc007bvr.1">
    <property type="organism name" value="mouse"/>
</dbReference>
<dbReference type="AGR" id="MGI:1349388"/>
<dbReference type="CTD" id="64708"/>
<dbReference type="MGI" id="MGI:1349388">
    <property type="gene designation" value="Cops7b"/>
</dbReference>
<dbReference type="VEuPathDB" id="HostDB:ENSMUSG00000026240"/>
<dbReference type="eggNOG" id="KOG3250">
    <property type="taxonomic scope" value="Eukaryota"/>
</dbReference>
<dbReference type="GeneTree" id="ENSGT00940000157155"/>
<dbReference type="HOGENOM" id="CLU_054426_1_0_1"/>
<dbReference type="InParanoid" id="Q8BV13"/>
<dbReference type="OMA" id="GTYKQFR"/>
<dbReference type="OrthoDB" id="10265275at2759"/>
<dbReference type="PhylomeDB" id="Q8BV13"/>
<dbReference type="TreeFam" id="TF101149"/>
<dbReference type="Reactome" id="R-MMU-5696394">
    <property type="pathway name" value="DNA Damage Recognition in GG-NER"/>
</dbReference>
<dbReference type="Reactome" id="R-MMU-6781823">
    <property type="pathway name" value="Formation of TC-NER Pre-Incision Complex"/>
</dbReference>
<dbReference type="Reactome" id="R-MMU-8856825">
    <property type="pathway name" value="Cargo recognition for clathrin-mediated endocytosis"/>
</dbReference>
<dbReference type="Reactome" id="R-MMU-8951664">
    <property type="pathway name" value="Neddylation"/>
</dbReference>
<dbReference type="BioGRID-ORCS" id="26895">
    <property type="hits" value="3 hits in 77 CRISPR screens"/>
</dbReference>
<dbReference type="ChiTaRS" id="Cops7b">
    <property type="organism name" value="mouse"/>
</dbReference>
<dbReference type="PRO" id="PR:Q8BV13"/>
<dbReference type="Proteomes" id="UP000000589">
    <property type="component" value="Chromosome 1"/>
</dbReference>
<dbReference type="RNAct" id="Q8BV13">
    <property type="molecule type" value="protein"/>
</dbReference>
<dbReference type="Bgee" id="ENSMUSG00000026240">
    <property type="expression patterns" value="Expressed in undifferentiated genital tubercle and 279 other cell types or tissues"/>
</dbReference>
<dbReference type="ExpressionAtlas" id="Q8BV13">
    <property type="expression patterns" value="baseline and differential"/>
</dbReference>
<dbReference type="GO" id="GO:0008180">
    <property type="term" value="C:COP9 signalosome"/>
    <property type="evidence" value="ECO:0007669"/>
    <property type="project" value="UniProtKB-KW"/>
</dbReference>
<dbReference type="GO" id="GO:0005737">
    <property type="term" value="C:cytoplasm"/>
    <property type="evidence" value="ECO:0007669"/>
    <property type="project" value="UniProtKB-SubCell"/>
</dbReference>
<dbReference type="GO" id="GO:0005654">
    <property type="term" value="C:nucleoplasm"/>
    <property type="evidence" value="ECO:0007669"/>
    <property type="project" value="Ensembl"/>
</dbReference>
<dbReference type="GO" id="GO:0010387">
    <property type="term" value="P:COP9 signalosome assembly"/>
    <property type="evidence" value="ECO:0007669"/>
    <property type="project" value="InterPro"/>
</dbReference>
<dbReference type="GO" id="GO:0000338">
    <property type="term" value="P:protein deneddylation"/>
    <property type="evidence" value="ECO:0007669"/>
    <property type="project" value="Ensembl"/>
</dbReference>
<dbReference type="InterPro" id="IPR045237">
    <property type="entry name" value="COPS7/eIF3m"/>
</dbReference>
<dbReference type="InterPro" id="IPR041481">
    <property type="entry name" value="CSN7_helixI"/>
</dbReference>
<dbReference type="InterPro" id="IPR000717">
    <property type="entry name" value="PCI_dom"/>
</dbReference>
<dbReference type="PANTHER" id="PTHR15350">
    <property type="entry name" value="COP9 SIGNALOSOME COMPLEX SUBUNIT 7/DENDRITIC CELL PROTEIN GA17"/>
    <property type="match status" value="1"/>
</dbReference>
<dbReference type="PANTHER" id="PTHR15350:SF8">
    <property type="entry name" value="COP9 SIGNALOSOME COMPLEX SUBUNIT 7B"/>
    <property type="match status" value="1"/>
</dbReference>
<dbReference type="Pfam" id="PF22061">
    <property type="entry name" value="CSN7_HB_subdom"/>
    <property type="match status" value="1"/>
</dbReference>
<dbReference type="Pfam" id="PF18392">
    <property type="entry name" value="CSN7a_helixI"/>
    <property type="match status" value="1"/>
</dbReference>
<dbReference type="Pfam" id="PF01399">
    <property type="entry name" value="PCI"/>
    <property type="match status" value="1"/>
</dbReference>
<dbReference type="SMART" id="SM00088">
    <property type="entry name" value="PINT"/>
    <property type="match status" value="1"/>
</dbReference>
<dbReference type="PROSITE" id="PS50250">
    <property type="entry name" value="PCI"/>
    <property type="match status" value="1"/>
</dbReference>
<sequence length="264" mass="29689">MAGEQKPSSNLLEQFILLAKGTSGSALTTLISQVLEAPGVYVFGELLELANVQELAEGANAAYLQLLNLFAYGTYPDYIANKESLPELSVAQQNKLKHLTIVSLASRMKCIPYSVLLKDLEMRNLRELEDLIIEAVYTDIIQGKLDQRNQLLEVDFCIGRDIRKKDINNIVKTLHEWCDGCEAVLLGIEQQVLRANQYKENHHRTQQQVEAEVSNIKKTLKATASSSAQEMEQQLAERECPPHTEQRQPTKKMSKVKGLVSSRH</sequence>
<protein>
    <recommendedName>
        <fullName>COP9 signalosome complex subunit 7b</fullName>
        <shortName>SGN7b</shortName>
        <shortName>Signalosome subunit 7b</shortName>
    </recommendedName>
    <alternativeName>
        <fullName>JAB1-containing signalosome subunit 7b</fullName>
    </alternativeName>
</protein>
<reference key="1">
    <citation type="journal article" date="1998" name="Curr. Biol.">
        <title>The COP9 complex is conserved between plants and mammals and is related to the 26S proteasome regulatory complex.</title>
        <authorList>
            <person name="Wei N."/>
            <person name="Tsuge T."/>
            <person name="Serino G."/>
            <person name="Dohmae N."/>
            <person name="Takio K."/>
            <person name="Matsui M."/>
            <person name="Deng X.-W."/>
        </authorList>
    </citation>
    <scope>NUCLEOTIDE SEQUENCE [MRNA]</scope>
    <scope>IDENTIFICATION IN THE CSN COMPLEX</scope>
    <source>
        <strain>C57BLKS/J</strain>
    </source>
</reference>
<reference key="2">
    <citation type="journal article" date="2005" name="Science">
        <title>The transcriptional landscape of the mammalian genome.</title>
        <authorList>
            <person name="Carninci P."/>
            <person name="Kasukawa T."/>
            <person name="Katayama S."/>
            <person name="Gough J."/>
            <person name="Frith M.C."/>
            <person name="Maeda N."/>
            <person name="Oyama R."/>
            <person name="Ravasi T."/>
            <person name="Lenhard B."/>
            <person name="Wells C."/>
            <person name="Kodzius R."/>
            <person name="Shimokawa K."/>
            <person name="Bajic V.B."/>
            <person name="Brenner S.E."/>
            <person name="Batalov S."/>
            <person name="Forrest A.R."/>
            <person name="Zavolan M."/>
            <person name="Davis M.J."/>
            <person name="Wilming L.G."/>
            <person name="Aidinis V."/>
            <person name="Allen J.E."/>
            <person name="Ambesi-Impiombato A."/>
            <person name="Apweiler R."/>
            <person name="Aturaliya R.N."/>
            <person name="Bailey T.L."/>
            <person name="Bansal M."/>
            <person name="Baxter L."/>
            <person name="Beisel K.W."/>
            <person name="Bersano T."/>
            <person name="Bono H."/>
            <person name="Chalk A.M."/>
            <person name="Chiu K.P."/>
            <person name="Choudhary V."/>
            <person name="Christoffels A."/>
            <person name="Clutterbuck D.R."/>
            <person name="Crowe M.L."/>
            <person name="Dalla E."/>
            <person name="Dalrymple B.P."/>
            <person name="de Bono B."/>
            <person name="Della Gatta G."/>
            <person name="di Bernardo D."/>
            <person name="Down T."/>
            <person name="Engstrom P."/>
            <person name="Fagiolini M."/>
            <person name="Faulkner G."/>
            <person name="Fletcher C.F."/>
            <person name="Fukushima T."/>
            <person name="Furuno M."/>
            <person name="Futaki S."/>
            <person name="Gariboldi M."/>
            <person name="Georgii-Hemming P."/>
            <person name="Gingeras T.R."/>
            <person name="Gojobori T."/>
            <person name="Green R.E."/>
            <person name="Gustincich S."/>
            <person name="Harbers M."/>
            <person name="Hayashi Y."/>
            <person name="Hensch T.K."/>
            <person name="Hirokawa N."/>
            <person name="Hill D."/>
            <person name="Huminiecki L."/>
            <person name="Iacono M."/>
            <person name="Ikeo K."/>
            <person name="Iwama A."/>
            <person name="Ishikawa T."/>
            <person name="Jakt M."/>
            <person name="Kanapin A."/>
            <person name="Katoh M."/>
            <person name="Kawasawa Y."/>
            <person name="Kelso J."/>
            <person name="Kitamura H."/>
            <person name="Kitano H."/>
            <person name="Kollias G."/>
            <person name="Krishnan S.P."/>
            <person name="Kruger A."/>
            <person name="Kummerfeld S.K."/>
            <person name="Kurochkin I.V."/>
            <person name="Lareau L.F."/>
            <person name="Lazarevic D."/>
            <person name="Lipovich L."/>
            <person name="Liu J."/>
            <person name="Liuni S."/>
            <person name="McWilliam S."/>
            <person name="Madan Babu M."/>
            <person name="Madera M."/>
            <person name="Marchionni L."/>
            <person name="Matsuda H."/>
            <person name="Matsuzawa S."/>
            <person name="Miki H."/>
            <person name="Mignone F."/>
            <person name="Miyake S."/>
            <person name="Morris K."/>
            <person name="Mottagui-Tabar S."/>
            <person name="Mulder N."/>
            <person name="Nakano N."/>
            <person name="Nakauchi H."/>
            <person name="Ng P."/>
            <person name="Nilsson R."/>
            <person name="Nishiguchi S."/>
            <person name="Nishikawa S."/>
            <person name="Nori F."/>
            <person name="Ohara O."/>
            <person name="Okazaki Y."/>
            <person name="Orlando V."/>
            <person name="Pang K.C."/>
            <person name="Pavan W.J."/>
            <person name="Pavesi G."/>
            <person name="Pesole G."/>
            <person name="Petrovsky N."/>
            <person name="Piazza S."/>
            <person name="Reed J."/>
            <person name="Reid J.F."/>
            <person name="Ring B.Z."/>
            <person name="Ringwald M."/>
            <person name="Rost B."/>
            <person name="Ruan Y."/>
            <person name="Salzberg S.L."/>
            <person name="Sandelin A."/>
            <person name="Schneider C."/>
            <person name="Schoenbach C."/>
            <person name="Sekiguchi K."/>
            <person name="Semple C.A."/>
            <person name="Seno S."/>
            <person name="Sessa L."/>
            <person name="Sheng Y."/>
            <person name="Shibata Y."/>
            <person name="Shimada H."/>
            <person name="Shimada K."/>
            <person name="Silva D."/>
            <person name="Sinclair B."/>
            <person name="Sperling S."/>
            <person name="Stupka E."/>
            <person name="Sugiura K."/>
            <person name="Sultana R."/>
            <person name="Takenaka Y."/>
            <person name="Taki K."/>
            <person name="Tammoja K."/>
            <person name="Tan S.L."/>
            <person name="Tang S."/>
            <person name="Taylor M.S."/>
            <person name="Tegner J."/>
            <person name="Teichmann S.A."/>
            <person name="Ueda H.R."/>
            <person name="van Nimwegen E."/>
            <person name="Verardo R."/>
            <person name="Wei C.L."/>
            <person name="Yagi K."/>
            <person name="Yamanishi H."/>
            <person name="Zabarovsky E."/>
            <person name="Zhu S."/>
            <person name="Zimmer A."/>
            <person name="Hide W."/>
            <person name="Bult C."/>
            <person name="Grimmond S.M."/>
            <person name="Teasdale R.D."/>
            <person name="Liu E.T."/>
            <person name="Brusic V."/>
            <person name="Quackenbush J."/>
            <person name="Wahlestedt C."/>
            <person name="Mattick J.S."/>
            <person name="Hume D.A."/>
            <person name="Kai C."/>
            <person name="Sasaki D."/>
            <person name="Tomaru Y."/>
            <person name="Fukuda S."/>
            <person name="Kanamori-Katayama M."/>
            <person name="Suzuki M."/>
            <person name="Aoki J."/>
            <person name="Arakawa T."/>
            <person name="Iida J."/>
            <person name="Imamura K."/>
            <person name="Itoh M."/>
            <person name="Kato T."/>
            <person name="Kawaji H."/>
            <person name="Kawagashira N."/>
            <person name="Kawashima T."/>
            <person name="Kojima M."/>
            <person name="Kondo S."/>
            <person name="Konno H."/>
            <person name="Nakano K."/>
            <person name="Ninomiya N."/>
            <person name="Nishio T."/>
            <person name="Okada M."/>
            <person name="Plessy C."/>
            <person name="Shibata K."/>
            <person name="Shiraki T."/>
            <person name="Suzuki S."/>
            <person name="Tagami M."/>
            <person name="Waki K."/>
            <person name="Watahiki A."/>
            <person name="Okamura-Oho Y."/>
            <person name="Suzuki H."/>
            <person name="Kawai J."/>
            <person name="Hayashizaki Y."/>
        </authorList>
    </citation>
    <scope>NUCLEOTIDE SEQUENCE [LARGE SCALE MRNA]</scope>
    <source>
        <strain>C57BL/6J</strain>
        <tissue>Amnion</tissue>
        <tissue>Head</tissue>
    </source>
</reference>
<reference key="3">
    <citation type="journal article" date="2004" name="Genome Res.">
        <title>The status, quality, and expansion of the NIH full-length cDNA project: the Mammalian Gene Collection (MGC).</title>
        <authorList>
            <consortium name="The MGC Project Team"/>
        </authorList>
    </citation>
    <scope>NUCLEOTIDE SEQUENCE [LARGE SCALE MRNA]</scope>
    <source>
        <strain>Czech II</strain>
        <tissue>Mammary tumor</tissue>
    </source>
</reference>
<reference key="4">
    <citation type="journal article" date="2010" name="Cell">
        <title>A tissue-specific atlas of mouse protein phosphorylation and expression.</title>
        <authorList>
            <person name="Huttlin E.L."/>
            <person name="Jedrychowski M.P."/>
            <person name="Elias J.E."/>
            <person name="Goswami T."/>
            <person name="Rad R."/>
            <person name="Beausoleil S.A."/>
            <person name="Villen J."/>
            <person name="Haas W."/>
            <person name="Sowa M.E."/>
            <person name="Gygi S.P."/>
        </authorList>
    </citation>
    <scope>IDENTIFICATION BY MASS SPECTROMETRY [LARGE SCALE ANALYSIS]</scope>
    <source>
        <tissue>Brain</tissue>
        <tissue>Heart</tissue>
        <tissue>Liver</tissue>
        <tissue>Lung</tissue>
        <tissue>Pancreas</tissue>
        <tissue>Spleen</tissue>
        <tissue>Testis</tissue>
    </source>
</reference>
<evidence type="ECO:0000250" key="1"/>
<evidence type="ECO:0000250" key="2">
    <source>
        <dbReference type="UniProtKB" id="Q9H9Q2"/>
    </source>
</evidence>
<evidence type="ECO:0000255" key="3"/>
<evidence type="ECO:0000255" key="4">
    <source>
        <dbReference type="PROSITE-ProRule" id="PRU01185"/>
    </source>
</evidence>
<evidence type="ECO:0000256" key="5">
    <source>
        <dbReference type="SAM" id="MobiDB-lite"/>
    </source>
</evidence>
<evidence type="ECO:0000269" key="6">
    <source>
    </source>
</evidence>
<evidence type="ECO:0000305" key="7"/>
<gene>
    <name type="primary">Cops7b</name>
    <name type="synonym">Csn7b</name>
</gene>